<protein>
    <recommendedName>
        <fullName evidence="1">Probable GTP-binding protein EngB</fullName>
    </recommendedName>
</protein>
<sequence>MFKDRPDRSDEVVLVGRSNVGKSTLMRAVTGHQVPTGQKPGVTRQPNHFDWASEDFMLTDLPGFGYMQGVEDGHEEAIKTEVVRYVESHADNIMVGVLVLDGKAAVDIIDRHSGGDEIPHVVELYYLLEELGVQPVVAVNKMDKVDDRDERLNDIADRLGLYPPWEQWQDVIAPITAKKDRIAALEDAVNSHFDAAKRDDLKQFFS</sequence>
<gene>
    <name evidence="1" type="primary">engB</name>
    <name type="ordered locus">VNG_2587C</name>
</gene>
<keyword id="KW-0131">Cell cycle</keyword>
<keyword id="KW-0132">Cell division</keyword>
<keyword id="KW-0342">GTP-binding</keyword>
<keyword id="KW-0460">Magnesium</keyword>
<keyword id="KW-0479">Metal-binding</keyword>
<keyword id="KW-0547">Nucleotide-binding</keyword>
<keyword id="KW-1185">Reference proteome</keyword>
<keyword id="KW-0717">Septation</keyword>
<accession>Q9HME0</accession>
<organism>
    <name type="scientific">Halobacterium salinarum (strain ATCC 700922 / JCM 11081 / NRC-1)</name>
    <name type="common">Halobacterium halobium</name>
    <dbReference type="NCBI Taxonomy" id="64091"/>
    <lineage>
        <taxon>Archaea</taxon>
        <taxon>Methanobacteriati</taxon>
        <taxon>Methanobacteriota</taxon>
        <taxon>Stenosarchaea group</taxon>
        <taxon>Halobacteria</taxon>
        <taxon>Halobacteriales</taxon>
        <taxon>Halobacteriaceae</taxon>
        <taxon>Halobacterium</taxon>
        <taxon>Halobacterium salinarum NRC-34001</taxon>
    </lineage>
</organism>
<comment type="function">
    <text evidence="1">Necessary for normal cell division and for the maintenance of normal septation.</text>
</comment>
<comment type="cofactor">
    <cofactor evidence="1">
        <name>Mg(2+)</name>
        <dbReference type="ChEBI" id="CHEBI:18420"/>
    </cofactor>
</comment>
<comment type="similarity">
    <text evidence="1">Belongs to the TRAFAC class TrmE-Era-EngA-EngB-Septin-like GTPase superfamily. EngB GTPase family.</text>
</comment>
<proteinExistence type="inferred from homology"/>
<dbReference type="EMBL" id="AE004437">
    <property type="protein sequence ID" value="AAG20631.1"/>
    <property type="molecule type" value="Genomic_DNA"/>
</dbReference>
<dbReference type="PIR" id="C84408">
    <property type="entry name" value="C84408"/>
</dbReference>
<dbReference type="RefSeq" id="WP_010903933.1">
    <property type="nucleotide sequence ID" value="NC_002607.1"/>
</dbReference>
<dbReference type="SMR" id="Q9HME0"/>
<dbReference type="FunCoup" id="Q9HME0">
    <property type="interactions" value="16"/>
</dbReference>
<dbReference type="STRING" id="64091.VNG_2587C"/>
<dbReference type="PaxDb" id="64091-VNG_2587C"/>
<dbReference type="GeneID" id="89348574"/>
<dbReference type="KEGG" id="hal:VNG_2587C"/>
<dbReference type="PATRIC" id="fig|64091.14.peg.2004"/>
<dbReference type="HOGENOM" id="CLU_033732_3_0_2"/>
<dbReference type="InParanoid" id="Q9HME0"/>
<dbReference type="OrthoDB" id="65113at2157"/>
<dbReference type="PhylomeDB" id="Q9HME0"/>
<dbReference type="Proteomes" id="UP000000554">
    <property type="component" value="Chromosome"/>
</dbReference>
<dbReference type="GO" id="GO:0005525">
    <property type="term" value="F:GTP binding"/>
    <property type="evidence" value="ECO:0007669"/>
    <property type="project" value="UniProtKB-UniRule"/>
</dbReference>
<dbReference type="GO" id="GO:0046872">
    <property type="term" value="F:metal ion binding"/>
    <property type="evidence" value="ECO:0007669"/>
    <property type="project" value="UniProtKB-KW"/>
</dbReference>
<dbReference type="GO" id="GO:0051301">
    <property type="term" value="P:cell division"/>
    <property type="evidence" value="ECO:0007669"/>
    <property type="project" value="UniProtKB-KW"/>
</dbReference>
<dbReference type="CDD" id="cd01876">
    <property type="entry name" value="YihA_EngB"/>
    <property type="match status" value="1"/>
</dbReference>
<dbReference type="Gene3D" id="3.40.50.300">
    <property type="entry name" value="P-loop containing nucleotide triphosphate hydrolases"/>
    <property type="match status" value="1"/>
</dbReference>
<dbReference type="HAMAP" id="MF_00321">
    <property type="entry name" value="GTPase_EngB"/>
    <property type="match status" value="1"/>
</dbReference>
<dbReference type="InterPro" id="IPR030393">
    <property type="entry name" value="G_ENGB_dom"/>
</dbReference>
<dbReference type="InterPro" id="IPR006073">
    <property type="entry name" value="GTP-bd"/>
</dbReference>
<dbReference type="InterPro" id="IPR019987">
    <property type="entry name" value="GTP-bd_ribosome_bio_YsxC"/>
</dbReference>
<dbReference type="InterPro" id="IPR027417">
    <property type="entry name" value="P-loop_NTPase"/>
</dbReference>
<dbReference type="NCBIfam" id="NF003255">
    <property type="entry name" value="PRK04213.1"/>
    <property type="match status" value="1"/>
</dbReference>
<dbReference type="PANTHER" id="PTHR11649:SF13">
    <property type="entry name" value="ENGB-TYPE G DOMAIN-CONTAINING PROTEIN"/>
    <property type="match status" value="1"/>
</dbReference>
<dbReference type="PANTHER" id="PTHR11649">
    <property type="entry name" value="MSS1/TRME-RELATED GTP-BINDING PROTEIN"/>
    <property type="match status" value="1"/>
</dbReference>
<dbReference type="Pfam" id="PF01926">
    <property type="entry name" value="MMR_HSR1"/>
    <property type="match status" value="1"/>
</dbReference>
<dbReference type="SUPFAM" id="SSF52540">
    <property type="entry name" value="P-loop containing nucleoside triphosphate hydrolases"/>
    <property type="match status" value="1"/>
</dbReference>
<dbReference type="PROSITE" id="PS51706">
    <property type="entry name" value="G_ENGB"/>
    <property type="match status" value="1"/>
</dbReference>
<evidence type="ECO:0000255" key="1">
    <source>
        <dbReference type="HAMAP-Rule" id="MF_00321"/>
    </source>
</evidence>
<reference key="1">
    <citation type="journal article" date="2000" name="Proc. Natl. Acad. Sci. U.S.A.">
        <title>Genome sequence of Halobacterium species NRC-1.</title>
        <authorList>
            <person name="Ng W.V."/>
            <person name="Kennedy S.P."/>
            <person name="Mahairas G.G."/>
            <person name="Berquist B."/>
            <person name="Pan M."/>
            <person name="Shukla H.D."/>
            <person name="Lasky S.R."/>
            <person name="Baliga N.S."/>
            <person name="Thorsson V."/>
            <person name="Sbrogna J."/>
            <person name="Swartzell S."/>
            <person name="Weir D."/>
            <person name="Hall J."/>
            <person name="Dahl T.A."/>
            <person name="Welti R."/>
            <person name="Goo Y.A."/>
            <person name="Leithauser B."/>
            <person name="Keller K."/>
            <person name="Cruz R."/>
            <person name="Danson M.J."/>
            <person name="Hough D.W."/>
            <person name="Maddocks D.G."/>
            <person name="Jablonski P.E."/>
            <person name="Krebs M.P."/>
            <person name="Angevine C.M."/>
            <person name="Dale H."/>
            <person name="Isenbarger T.A."/>
            <person name="Peck R.F."/>
            <person name="Pohlschroder M."/>
            <person name="Spudich J.L."/>
            <person name="Jung K.-H."/>
            <person name="Alam M."/>
            <person name="Freitas T."/>
            <person name="Hou S."/>
            <person name="Daniels C.J."/>
            <person name="Dennis P.P."/>
            <person name="Omer A.D."/>
            <person name="Ebhardt H."/>
            <person name="Lowe T.M."/>
            <person name="Liang P."/>
            <person name="Riley M."/>
            <person name="Hood L."/>
            <person name="DasSarma S."/>
        </authorList>
    </citation>
    <scope>NUCLEOTIDE SEQUENCE [LARGE SCALE GENOMIC DNA]</scope>
    <source>
        <strain>ATCC 700922 / JCM 11081 / NRC-1</strain>
    </source>
</reference>
<name>ENGB_HALSA</name>
<feature type="chain" id="PRO_0000157809" description="Probable GTP-binding protein EngB">
    <location>
        <begin position="1"/>
        <end position="206"/>
    </location>
</feature>
<feature type="domain" description="EngB-type G" evidence="1">
    <location>
        <begin position="8"/>
        <end position="195"/>
    </location>
</feature>
<feature type="binding site" evidence="1">
    <location>
        <begin position="16"/>
        <end position="23"/>
    </location>
    <ligand>
        <name>GTP</name>
        <dbReference type="ChEBI" id="CHEBI:37565"/>
    </ligand>
</feature>
<feature type="binding site" evidence="1">
    <location>
        <position position="23"/>
    </location>
    <ligand>
        <name>Mg(2+)</name>
        <dbReference type="ChEBI" id="CHEBI:18420"/>
    </ligand>
</feature>
<feature type="binding site" evidence="1">
    <location>
        <begin position="41"/>
        <end position="45"/>
    </location>
    <ligand>
        <name>GTP</name>
        <dbReference type="ChEBI" id="CHEBI:37565"/>
    </ligand>
</feature>
<feature type="binding site" evidence="1">
    <location>
        <position position="43"/>
    </location>
    <ligand>
        <name>Mg(2+)</name>
        <dbReference type="ChEBI" id="CHEBI:18420"/>
    </ligand>
</feature>
<feature type="binding site" evidence="1">
    <location>
        <begin position="60"/>
        <end position="63"/>
    </location>
    <ligand>
        <name>GTP</name>
        <dbReference type="ChEBI" id="CHEBI:37565"/>
    </ligand>
</feature>
<feature type="binding site" evidence="1">
    <location>
        <begin position="140"/>
        <end position="143"/>
    </location>
    <ligand>
        <name>GTP</name>
        <dbReference type="ChEBI" id="CHEBI:37565"/>
    </ligand>
</feature>
<feature type="binding site" evidence="1">
    <location>
        <begin position="175"/>
        <end position="177"/>
    </location>
    <ligand>
        <name>GTP</name>
        <dbReference type="ChEBI" id="CHEBI:37565"/>
    </ligand>
</feature>